<evidence type="ECO:0000255" key="1">
    <source>
        <dbReference type="HAMAP-Rule" id="MF_00380"/>
    </source>
</evidence>
<evidence type="ECO:0000256" key="2">
    <source>
        <dbReference type="SAM" id="MobiDB-lite"/>
    </source>
</evidence>
<sequence>MAGRTVTRVDLCEAVYQKVGLSRTESSAFVELVLKEITDCLERGETVKLSSFGSFLVRQKGQRIGRNPKTGTEVPISPRRVMVFKPSAILKQRINANGAMPMSTEESDENTAQSASGG</sequence>
<keyword id="KW-0233">DNA recombination</keyword>
<keyword id="KW-0238">DNA-binding</keyword>
<keyword id="KW-0804">Transcription</keyword>
<keyword id="KW-0805">Transcription regulation</keyword>
<keyword id="KW-0810">Translation regulation</keyword>
<dbReference type="EMBL" id="BX572601">
    <property type="protein sequence ID" value="CAE28184.1"/>
    <property type="molecule type" value="Genomic_DNA"/>
</dbReference>
<dbReference type="RefSeq" id="WP_011158293.1">
    <property type="nucleotide sequence ID" value="NZ_CP116810.1"/>
</dbReference>
<dbReference type="SMR" id="Q6N676"/>
<dbReference type="STRING" id="258594.RPA2742"/>
<dbReference type="GeneID" id="66893818"/>
<dbReference type="eggNOG" id="COG0776">
    <property type="taxonomic scope" value="Bacteria"/>
</dbReference>
<dbReference type="HOGENOM" id="CLU_105066_1_1_5"/>
<dbReference type="PhylomeDB" id="Q6N676"/>
<dbReference type="GO" id="GO:0005829">
    <property type="term" value="C:cytosol"/>
    <property type="evidence" value="ECO:0007669"/>
    <property type="project" value="TreeGrafter"/>
</dbReference>
<dbReference type="GO" id="GO:0003677">
    <property type="term" value="F:DNA binding"/>
    <property type="evidence" value="ECO:0007669"/>
    <property type="project" value="UniProtKB-UniRule"/>
</dbReference>
<dbReference type="GO" id="GO:0030527">
    <property type="term" value="F:structural constituent of chromatin"/>
    <property type="evidence" value="ECO:0007669"/>
    <property type="project" value="InterPro"/>
</dbReference>
<dbReference type="GO" id="GO:0006310">
    <property type="term" value="P:DNA recombination"/>
    <property type="evidence" value="ECO:0007669"/>
    <property type="project" value="UniProtKB-UniRule"/>
</dbReference>
<dbReference type="GO" id="GO:0009893">
    <property type="term" value="P:positive regulation of metabolic process"/>
    <property type="evidence" value="ECO:0007669"/>
    <property type="project" value="UniProtKB-ARBA"/>
</dbReference>
<dbReference type="GO" id="GO:0006355">
    <property type="term" value="P:regulation of DNA-templated transcription"/>
    <property type="evidence" value="ECO:0007669"/>
    <property type="project" value="UniProtKB-UniRule"/>
</dbReference>
<dbReference type="GO" id="GO:0006417">
    <property type="term" value="P:regulation of translation"/>
    <property type="evidence" value="ECO:0007669"/>
    <property type="project" value="UniProtKB-UniRule"/>
</dbReference>
<dbReference type="CDD" id="cd13835">
    <property type="entry name" value="IHF_A"/>
    <property type="match status" value="1"/>
</dbReference>
<dbReference type="FunFam" id="4.10.520.10:FF:000010">
    <property type="entry name" value="Integration host factor subunit alpha"/>
    <property type="match status" value="1"/>
</dbReference>
<dbReference type="Gene3D" id="4.10.520.10">
    <property type="entry name" value="IHF-like DNA-binding proteins"/>
    <property type="match status" value="1"/>
</dbReference>
<dbReference type="HAMAP" id="MF_00380">
    <property type="entry name" value="IHF_alpha"/>
    <property type="match status" value="1"/>
</dbReference>
<dbReference type="InterPro" id="IPR000119">
    <property type="entry name" value="Hist_DNA-bd"/>
</dbReference>
<dbReference type="InterPro" id="IPR020816">
    <property type="entry name" value="Histone-like_DNA-bd_CS"/>
</dbReference>
<dbReference type="InterPro" id="IPR010992">
    <property type="entry name" value="IHF-like_DNA-bd_dom_sf"/>
</dbReference>
<dbReference type="InterPro" id="IPR005684">
    <property type="entry name" value="IHF_alpha"/>
</dbReference>
<dbReference type="NCBIfam" id="TIGR00987">
    <property type="entry name" value="himA"/>
    <property type="match status" value="1"/>
</dbReference>
<dbReference type="NCBIfam" id="NF001401">
    <property type="entry name" value="PRK00285.1"/>
    <property type="match status" value="1"/>
</dbReference>
<dbReference type="PANTHER" id="PTHR33175">
    <property type="entry name" value="DNA-BINDING PROTEIN HU"/>
    <property type="match status" value="1"/>
</dbReference>
<dbReference type="PANTHER" id="PTHR33175:SF2">
    <property type="entry name" value="INTEGRATION HOST FACTOR SUBUNIT ALPHA"/>
    <property type="match status" value="1"/>
</dbReference>
<dbReference type="Pfam" id="PF00216">
    <property type="entry name" value="Bac_DNA_binding"/>
    <property type="match status" value="1"/>
</dbReference>
<dbReference type="PRINTS" id="PR01727">
    <property type="entry name" value="DNABINDINGHU"/>
</dbReference>
<dbReference type="SMART" id="SM00411">
    <property type="entry name" value="BHL"/>
    <property type="match status" value="1"/>
</dbReference>
<dbReference type="SUPFAM" id="SSF47729">
    <property type="entry name" value="IHF-like DNA-binding proteins"/>
    <property type="match status" value="1"/>
</dbReference>
<dbReference type="PROSITE" id="PS00045">
    <property type="entry name" value="HISTONE_LIKE"/>
    <property type="match status" value="1"/>
</dbReference>
<reference key="1">
    <citation type="journal article" date="2004" name="Nat. Biotechnol.">
        <title>Complete genome sequence of the metabolically versatile photosynthetic bacterium Rhodopseudomonas palustris.</title>
        <authorList>
            <person name="Larimer F.W."/>
            <person name="Chain P."/>
            <person name="Hauser L."/>
            <person name="Lamerdin J.E."/>
            <person name="Malfatti S."/>
            <person name="Do L."/>
            <person name="Land M.L."/>
            <person name="Pelletier D.A."/>
            <person name="Beatty J.T."/>
            <person name="Lang A.S."/>
            <person name="Tabita F.R."/>
            <person name="Gibson J.L."/>
            <person name="Hanson T.E."/>
            <person name="Bobst C."/>
            <person name="Torres y Torres J.L."/>
            <person name="Peres C."/>
            <person name="Harrison F.H."/>
            <person name="Gibson J."/>
            <person name="Harwood C.S."/>
        </authorList>
    </citation>
    <scope>NUCLEOTIDE SEQUENCE [LARGE SCALE GENOMIC DNA]</scope>
    <source>
        <strain>ATCC BAA-98 / CGA009</strain>
    </source>
</reference>
<comment type="function">
    <text evidence="1">This protein is one of the two subunits of integration host factor, a specific DNA-binding protein that functions in genetic recombination as well as in transcriptional and translational control.</text>
</comment>
<comment type="subunit">
    <text evidence="1">Heterodimer of an alpha and a beta chain.</text>
</comment>
<comment type="similarity">
    <text evidence="1">Belongs to the bacterial histone-like protein family.</text>
</comment>
<feature type="chain" id="PRO_1000060561" description="Integration host factor subunit alpha">
    <location>
        <begin position="1"/>
        <end position="118"/>
    </location>
</feature>
<feature type="region of interest" description="Disordered" evidence="2">
    <location>
        <begin position="97"/>
        <end position="118"/>
    </location>
</feature>
<name>IHFA_RHOPA</name>
<organism>
    <name type="scientific">Rhodopseudomonas palustris (strain ATCC BAA-98 / CGA009)</name>
    <dbReference type="NCBI Taxonomy" id="258594"/>
    <lineage>
        <taxon>Bacteria</taxon>
        <taxon>Pseudomonadati</taxon>
        <taxon>Pseudomonadota</taxon>
        <taxon>Alphaproteobacteria</taxon>
        <taxon>Hyphomicrobiales</taxon>
        <taxon>Nitrobacteraceae</taxon>
        <taxon>Rhodopseudomonas</taxon>
    </lineage>
</organism>
<gene>
    <name evidence="1" type="primary">ihfA</name>
    <name evidence="1" type="synonym">himA</name>
    <name type="ordered locus">RPA2742</name>
</gene>
<proteinExistence type="inferred from homology"/>
<accession>Q6N676</accession>
<protein>
    <recommendedName>
        <fullName evidence="1">Integration host factor subunit alpha</fullName>
        <shortName evidence="1">IHF-alpha</shortName>
    </recommendedName>
</protein>